<name>HIS7_AZOC5</name>
<protein>
    <recommendedName>
        <fullName evidence="1">Imidazoleglycerol-phosphate dehydratase</fullName>
        <shortName evidence="1">IGPD</shortName>
        <ecNumber evidence="1">4.2.1.19</ecNumber>
    </recommendedName>
</protein>
<keyword id="KW-0028">Amino-acid biosynthesis</keyword>
<keyword id="KW-0963">Cytoplasm</keyword>
<keyword id="KW-0368">Histidine biosynthesis</keyword>
<keyword id="KW-0456">Lyase</keyword>
<keyword id="KW-1185">Reference proteome</keyword>
<dbReference type="EC" id="4.2.1.19" evidence="1"/>
<dbReference type="EMBL" id="AP009384">
    <property type="protein sequence ID" value="BAF90500.1"/>
    <property type="molecule type" value="Genomic_DNA"/>
</dbReference>
<dbReference type="RefSeq" id="WP_012173021.1">
    <property type="nucleotide sequence ID" value="NC_009937.1"/>
</dbReference>
<dbReference type="SMR" id="A8HYU9"/>
<dbReference type="STRING" id="438753.AZC_4502"/>
<dbReference type="KEGG" id="azc:AZC_4502"/>
<dbReference type="eggNOG" id="COG0131">
    <property type="taxonomic scope" value="Bacteria"/>
</dbReference>
<dbReference type="HOGENOM" id="CLU_044308_3_0_5"/>
<dbReference type="UniPathway" id="UPA00031">
    <property type="reaction ID" value="UER00011"/>
</dbReference>
<dbReference type="Proteomes" id="UP000000270">
    <property type="component" value="Chromosome"/>
</dbReference>
<dbReference type="GO" id="GO:0005737">
    <property type="term" value="C:cytoplasm"/>
    <property type="evidence" value="ECO:0007669"/>
    <property type="project" value="UniProtKB-SubCell"/>
</dbReference>
<dbReference type="GO" id="GO:0004424">
    <property type="term" value="F:imidazoleglycerol-phosphate dehydratase activity"/>
    <property type="evidence" value="ECO:0007669"/>
    <property type="project" value="UniProtKB-UniRule"/>
</dbReference>
<dbReference type="GO" id="GO:0000105">
    <property type="term" value="P:L-histidine biosynthetic process"/>
    <property type="evidence" value="ECO:0007669"/>
    <property type="project" value="UniProtKB-UniRule"/>
</dbReference>
<dbReference type="CDD" id="cd07914">
    <property type="entry name" value="IGPD"/>
    <property type="match status" value="1"/>
</dbReference>
<dbReference type="FunFam" id="3.30.230.40:FF:000001">
    <property type="entry name" value="Imidazoleglycerol-phosphate dehydratase HisB"/>
    <property type="match status" value="1"/>
</dbReference>
<dbReference type="FunFam" id="3.30.230.40:FF:000003">
    <property type="entry name" value="Imidazoleglycerol-phosphate dehydratase HisB"/>
    <property type="match status" value="1"/>
</dbReference>
<dbReference type="Gene3D" id="3.30.230.40">
    <property type="entry name" value="Imidazole glycerol phosphate dehydratase, domain 1"/>
    <property type="match status" value="2"/>
</dbReference>
<dbReference type="HAMAP" id="MF_00076">
    <property type="entry name" value="HisB"/>
    <property type="match status" value="1"/>
</dbReference>
<dbReference type="InterPro" id="IPR038494">
    <property type="entry name" value="IGPD_sf"/>
</dbReference>
<dbReference type="InterPro" id="IPR000807">
    <property type="entry name" value="ImidazoleglycerolP_deHydtase"/>
</dbReference>
<dbReference type="InterPro" id="IPR020565">
    <property type="entry name" value="ImidazoleglycerP_deHydtase_CS"/>
</dbReference>
<dbReference type="InterPro" id="IPR020568">
    <property type="entry name" value="Ribosomal_Su5_D2-typ_SF"/>
</dbReference>
<dbReference type="NCBIfam" id="NF002109">
    <property type="entry name" value="PRK00951.1-5"/>
    <property type="match status" value="1"/>
</dbReference>
<dbReference type="NCBIfam" id="NF002111">
    <property type="entry name" value="PRK00951.2-1"/>
    <property type="match status" value="1"/>
</dbReference>
<dbReference type="NCBIfam" id="NF002114">
    <property type="entry name" value="PRK00951.2-4"/>
    <property type="match status" value="1"/>
</dbReference>
<dbReference type="PANTHER" id="PTHR23133:SF2">
    <property type="entry name" value="IMIDAZOLEGLYCEROL-PHOSPHATE DEHYDRATASE"/>
    <property type="match status" value="1"/>
</dbReference>
<dbReference type="PANTHER" id="PTHR23133">
    <property type="entry name" value="IMIDAZOLEGLYCEROL-PHOSPHATE DEHYDRATASE HIS7"/>
    <property type="match status" value="1"/>
</dbReference>
<dbReference type="Pfam" id="PF00475">
    <property type="entry name" value="IGPD"/>
    <property type="match status" value="1"/>
</dbReference>
<dbReference type="SUPFAM" id="SSF54211">
    <property type="entry name" value="Ribosomal protein S5 domain 2-like"/>
    <property type="match status" value="2"/>
</dbReference>
<dbReference type="PROSITE" id="PS00954">
    <property type="entry name" value="IGP_DEHYDRATASE_1"/>
    <property type="match status" value="1"/>
</dbReference>
<dbReference type="PROSITE" id="PS00955">
    <property type="entry name" value="IGP_DEHYDRATASE_2"/>
    <property type="match status" value="1"/>
</dbReference>
<gene>
    <name evidence="1" type="primary">hisB</name>
    <name type="ordered locus">AZC_4502</name>
</gene>
<feature type="chain" id="PRO_1000071201" description="Imidazoleglycerol-phosphate dehydratase">
    <location>
        <begin position="1"/>
        <end position="197"/>
    </location>
</feature>
<reference key="1">
    <citation type="submission" date="2007-04" db="EMBL/GenBank/DDBJ databases">
        <title>Complete genome sequence of the nitrogen-fixing bacterium Azorhizobium caulinodans ORS571.</title>
        <authorList>
            <person name="Lee K.B."/>
            <person name="Backer P.D."/>
            <person name="Aono T."/>
            <person name="Liu C.T."/>
            <person name="Suzuki S."/>
            <person name="Suzuki T."/>
            <person name="Kaneko T."/>
            <person name="Yamada M."/>
            <person name="Tabata S."/>
            <person name="Kupfer D.M."/>
            <person name="Najar F.Z."/>
            <person name="Wiley G.B."/>
            <person name="Roe B."/>
            <person name="Binnewies T."/>
            <person name="Ussery D."/>
            <person name="Vereecke D."/>
            <person name="Gevers D."/>
            <person name="Holsters M."/>
            <person name="Oyaizu H."/>
        </authorList>
    </citation>
    <scope>NUCLEOTIDE SEQUENCE [LARGE SCALE GENOMIC DNA]</scope>
    <source>
        <strain>ATCC 43989 / DSM 5975 / JCM 20966 / LMG 6465 / NBRC 14845 / NCIMB 13405 / ORS 571</strain>
    </source>
</reference>
<organism>
    <name type="scientific">Azorhizobium caulinodans (strain ATCC 43989 / DSM 5975 / JCM 20966 / LMG 6465 / NBRC 14845 / NCIMB 13405 / ORS 571)</name>
    <dbReference type="NCBI Taxonomy" id="438753"/>
    <lineage>
        <taxon>Bacteria</taxon>
        <taxon>Pseudomonadati</taxon>
        <taxon>Pseudomonadota</taxon>
        <taxon>Alphaproteobacteria</taxon>
        <taxon>Hyphomicrobiales</taxon>
        <taxon>Xanthobacteraceae</taxon>
        <taxon>Azorhizobium</taxon>
    </lineage>
</organism>
<comment type="catalytic activity">
    <reaction evidence="1">
        <text>D-erythro-1-(imidazol-4-yl)glycerol 3-phosphate = 3-(imidazol-4-yl)-2-oxopropyl phosphate + H2O</text>
        <dbReference type="Rhea" id="RHEA:11040"/>
        <dbReference type="ChEBI" id="CHEBI:15377"/>
        <dbReference type="ChEBI" id="CHEBI:57766"/>
        <dbReference type="ChEBI" id="CHEBI:58278"/>
        <dbReference type="EC" id="4.2.1.19"/>
    </reaction>
</comment>
<comment type="pathway">
    <text evidence="1">Amino-acid biosynthesis; L-histidine biosynthesis; L-histidine from 5-phospho-alpha-D-ribose 1-diphosphate: step 6/9.</text>
</comment>
<comment type="subcellular location">
    <subcellularLocation>
        <location evidence="1">Cytoplasm</location>
    </subcellularLocation>
</comment>
<comment type="similarity">
    <text evidence="1">Belongs to the imidazoleglycerol-phosphate dehydratase family.</text>
</comment>
<evidence type="ECO:0000255" key="1">
    <source>
        <dbReference type="HAMAP-Rule" id="MF_00076"/>
    </source>
</evidence>
<proteinExistence type="inferred from homology"/>
<sequence>MRQAEIVRETKETKVRLAVNLDGTGRASIATGIGFFDHMLDLLARHARFDLEVEAKGDLHVDFHHTTEDVGIVLGQAIRRALGDMRGITRYADLHLPMDETLTRVALDISGRPFLVFRTEFKVGKIGEFDTELVREFFQAFASNAGVTLHVETLYGDNAHHIAESCFKGLARALRAAVAIDPAAAGEIPSTKGALGG</sequence>
<accession>A8HYU9</accession>